<sequence>MLEGVIRESITKANAKALKKDGYLIANVYGKGIENVNGAFKLNPFIKYLKEKKHLIFPVKLGDKTFEVVVQEYQKNPVTNELIHVDLLAVTKGVKSKFKVPVKHQGTPVGLKNKGILMLSKKRISVECAPEHLPDHYLVDVAPLDVNESILVRDLEKHENVKILDHDSIAVIGVIKAK</sequence>
<reference key="1">
    <citation type="journal article" date="2006" name="Proc. Natl. Acad. Sci. U.S.A.">
        <title>The complete genome sequence of a chronic atrophic gastritis Helicobacter pylori strain: evolution during disease progression.</title>
        <authorList>
            <person name="Oh J.D."/>
            <person name="Kling-Baeckhed H."/>
            <person name="Giannakis M."/>
            <person name="Xu J."/>
            <person name="Fulton R.S."/>
            <person name="Fulton L.A."/>
            <person name="Cordum H.S."/>
            <person name="Wang C."/>
            <person name="Elliott G."/>
            <person name="Edwards J."/>
            <person name="Mardis E.R."/>
            <person name="Engstrand L.G."/>
            <person name="Gordon J.I."/>
        </authorList>
    </citation>
    <scope>NUCLEOTIDE SEQUENCE [LARGE SCALE GENOMIC DNA]</scope>
    <source>
        <strain>HPAG1</strain>
    </source>
</reference>
<gene>
    <name evidence="1" type="primary">rplY</name>
    <name evidence="1" type="synonym">ctc</name>
    <name type="ordered locus">HPAG1_1417</name>
</gene>
<keyword id="KW-0687">Ribonucleoprotein</keyword>
<keyword id="KW-0689">Ribosomal protein</keyword>
<keyword id="KW-0694">RNA-binding</keyword>
<keyword id="KW-0699">rRNA-binding</keyword>
<accession>Q1CRD8</accession>
<dbReference type="EMBL" id="CP000241">
    <property type="protein sequence ID" value="ABF85484.1"/>
    <property type="molecule type" value="Genomic_DNA"/>
</dbReference>
<dbReference type="RefSeq" id="WP_000889333.1">
    <property type="nucleotide sequence ID" value="NC_008086.1"/>
</dbReference>
<dbReference type="SMR" id="Q1CRD8"/>
<dbReference type="KEGG" id="hpa:HPAG1_1417"/>
<dbReference type="HOGENOM" id="CLU_075939_2_2_7"/>
<dbReference type="GO" id="GO:0022625">
    <property type="term" value="C:cytosolic large ribosomal subunit"/>
    <property type="evidence" value="ECO:0007669"/>
    <property type="project" value="TreeGrafter"/>
</dbReference>
<dbReference type="GO" id="GO:0008097">
    <property type="term" value="F:5S rRNA binding"/>
    <property type="evidence" value="ECO:0007669"/>
    <property type="project" value="InterPro"/>
</dbReference>
<dbReference type="GO" id="GO:0003735">
    <property type="term" value="F:structural constituent of ribosome"/>
    <property type="evidence" value="ECO:0007669"/>
    <property type="project" value="InterPro"/>
</dbReference>
<dbReference type="GO" id="GO:0006412">
    <property type="term" value="P:translation"/>
    <property type="evidence" value="ECO:0007669"/>
    <property type="project" value="UniProtKB-UniRule"/>
</dbReference>
<dbReference type="CDD" id="cd00495">
    <property type="entry name" value="Ribosomal_L25_TL5_CTC"/>
    <property type="match status" value="1"/>
</dbReference>
<dbReference type="Gene3D" id="2.170.120.20">
    <property type="entry name" value="Ribosomal protein L25, beta domain"/>
    <property type="match status" value="1"/>
</dbReference>
<dbReference type="Gene3D" id="2.40.240.10">
    <property type="entry name" value="Ribosomal Protein L25, Chain P"/>
    <property type="match status" value="1"/>
</dbReference>
<dbReference type="HAMAP" id="MF_01334">
    <property type="entry name" value="Ribosomal_bL25_CTC"/>
    <property type="match status" value="1"/>
</dbReference>
<dbReference type="InterPro" id="IPR020056">
    <property type="entry name" value="Rbsml_bL25/Gln-tRNA_synth_N"/>
</dbReference>
<dbReference type="InterPro" id="IPR011035">
    <property type="entry name" value="Ribosomal_bL25/Gln-tRNA_synth"/>
</dbReference>
<dbReference type="InterPro" id="IPR020057">
    <property type="entry name" value="Ribosomal_bL25_b-dom"/>
</dbReference>
<dbReference type="InterPro" id="IPR037121">
    <property type="entry name" value="Ribosomal_bL25_C"/>
</dbReference>
<dbReference type="InterPro" id="IPR001021">
    <property type="entry name" value="Ribosomal_bL25_long"/>
</dbReference>
<dbReference type="InterPro" id="IPR029751">
    <property type="entry name" value="Ribosomal_L25_dom"/>
</dbReference>
<dbReference type="InterPro" id="IPR020930">
    <property type="entry name" value="Ribosomal_uL5_bac-type"/>
</dbReference>
<dbReference type="NCBIfam" id="TIGR00731">
    <property type="entry name" value="bL25_bact_ctc"/>
    <property type="match status" value="1"/>
</dbReference>
<dbReference type="NCBIfam" id="NF004129">
    <property type="entry name" value="PRK05618.1-4"/>
    <property type="match status" value="1"/>
</dbReference>
<dbReference type="PANTHER" id="PTHR33284">
    <property type="entry name" value="RIBOSOMAL PROTEIN L25/GLN-TRNA SYNTHETASE, ANTI-CODON-BINDING DOMAIN-CONTAINING PROTEIN"/>
    <property type="match status" value="1"/>
</dbReference>
<dbReference type="PANTHER" id="PTHR33284:SF1">
    <property type="entry name" value="RIBOSOMAL PROTEIN L25_GLN-TRNA SYNTHETASE, ANTI-CODON-BINDING DOMAIN-CONTAINING PROTEIN"/>
    <property type="match status" value="1"/>
</dbReference>
<dbReference type="Pfam" id="PF01386">
    <property type="entry name" value="Ribosomal_L25p"/>
    <property type="match status" value="1"/>
</dbReference>
<dbReference type="Pfam" id="PF14693">
    <property type="entry name" value="Ribosomal_TL5_C"/>
    <property type="match status" value="1"/>
</dbReference>
<dbReference type="SUPFAM" id="SSF50715">
    <property type="entry name" value="Ribosomal protein L25-like"/>
    <property type="match status" value="1"/>
</dbReference>
<protein>
    <recommendedName>
        <fullName evidence="1">Large ribosomal subunit protein bL25</fullName>
    </recommendedName>
    <alternativeName>
        <fullName evidence="2">50S ribosomal protein L25</fullName>
    </alternativeName>
    <alternativeName>
        <fullName evidence="1">General stress protein CTC</fullName>
    </alternativeName>
</protein>
<evidence type="ECO:0000255" key="1">
    <source>
        <dbReference type="HAMAP-Rule" id="MF_01334"/>
    </source>
</evidence>
<evidence type="ECO:0000305" key="2"/>
<organism>
    <name type="scientific">Helicobacter pylori (strain HPAG1)</name>
    <dbReference type="NCBI Taxonomy" id="357544"/>
    <lineage>
        <taxon>Bacteria</taxon>
        <taxon>Pseudomonadati</taxon>
        <taxon>Campylobacterota</taxon>
        <taxon>Epsilonproteobacteria</taxon>
        <taxon>Campylobacterales</taxon>
        <taxon>Helicobacteraceae</taxon>
        <taxon>Helicobacter</taxon>
    </lineage>
</organism>
<proteinExistence type="inferred from homology"/>
<name>RL25_HELPH</name>
<feature type="chain" id="PRO_1000052894" description="Large ribosomal subunit protein bL25">
    <location>
        <begin position="1"/>
        <end position="178"/>
    </location>
</feature>
<comment type="function">
    <text evidence="1">This is one of the proteins that binds to the 5S RNA in the ribosome where it forms part of the central protuberance.</text>
</comment>
<comment type="subunit">
    <text evidence="1">Part of the 50S ribosomal subunit; part of the 5S rRNA/L5/L18/L25 subcomplex. Contacts the 5S rRNA. Binds to the 5S rRNA independently of L5 and L18.</text>
</comment>
<comment type="similarity">
    <text evidence="1">Belongs to the bacterial ribosomal protein bL25 family. CTC subfamily.</text>
</comment>